<accession>Q8CXU1</accession>
<proteinExistence type="inferred from homology"/>
<protein>
    <recommendedName>
        <fullName evidence="1">tRNA pseudouridine synthase B</fullName>
        <ecNumber evidence="1">5.4.99.25</ecNumber>
    </recommendedName>
    <alternativeName>
        <fullName evidence="1">tRNA pseudouridine(55) synthase</fullName>
        <shortName evidence="1">Psi55 synthase</shortName>
    </alternativeName>
    <alternativeName>
        <fullName evidence="1">tRNA pseudouridylate synthase</fullName>
    </alternativeName>
    <alternativeName>
        <fullName evidence="1">tRNA-uridine isomerase</fullName>
    </alternativeName>
</protein>
<gene>
    <name evidence="1" type="primary">truB</name>
    <name type="ordered locus">LA_0945</name>
</gene>
<comment type="function">
    <text evidence="1">Responsible for synthesis of pseudouridine from uracil-55 in the psi GC loop of transfer RNAs.</text>
</comment>
<comment type="catalytic activity">
    <reaction evidence="1">
        <text>uridine(55) in tRNA = pseudouridine(55) in tRNA</text>
        <dbReference type="Rhea" id="RHEA:42532"/>
        <dbReference type="Rhea" id="RHEA-COMP:10101"/>
        <dbReference type="Rhea" id="RHEA-COMP:10102"/>
        <dbReference type="ChEBI" id="CHEBI:65314"/>
        <dbReference type="ChEBI" id="CHEBI:65315"/>
        <dbReference type="EC" id="5.4.99.25"/>
    </reaction>
</comment>
<comment type="similarity">
    <text evidence="1">Belongs to the pseudouridine synthase TruB family. Type 1 subfamily.</text>
</comment>
<name>TRUB_LEPIN</name>
<feature type="chain" id="PRO_0000121856" description="tRNA pseudouridine synthase B">
    <location>
        <begin position="1"/>
        <end position="309"/>
    </location>
</feature>
<feature type="active site" description="Nucleophile" evidence="1">
    <location>
        <position position="52"/>
    </location>
</feature>
<organism>
    <name type="scientific">Leptospira interrogans serogroup Icterohaemorrhagiae serovar Lai (strain 56601)</name>
    <dbReference type="NCBI Taxonomy" id="189518"/>
    <lineage>
        <taxon>Bacteria</taxon>
        <taxon>Pseudomonadati</taxon>
        <taxon>Spirochaetota</taxon>
        <taxon>Spirochaetia</taxon>
        <taxon>Leptospirales</taxon>
        <taxon>Leptospiraceae</taxon>
        <taxon>Leptospira</taxon>
    </lineage>
</organism>
<keyword id="KW-0413">Isomerase</keyword>
<keyword id="KW-1185">Reference proteome</keyword>
<keyword id="KW-0819">tRNA processing</keyword>
<reference key="1">
    <citation type="journal article" date="2003" name="Nature">
        <title>Unique physiological and pathogenic features of Leptospira interrogans revealed by whole-genome sequencing.</title>
        <authorList>
            <person name="Ren S.-X."/>
            <person name="Fu G."/>
            <person name="Jiang X.-G."/>
            <person name="Zeng R."/>
            <person name="Miao Y.-G."/>
            <person name="Xu H."/>
            <person name="Zhang Y.-X."/>
            <person name="Xiong H."/>
            <person name="Lu G."/>
            <person name="Lu L.-F."/>
            <person name="Jiang H.-Q."/>
            <person name="Jia J."/>
            <person name="Tu Y.-F."/>
            <person name="Jiang J.-X."/>
            <person name="Gu W.-Y."/>
            <person name="Zhang Y.-Q."/>
            <person name="Cai Z."/>
            <person name="Sheng H.-H."/>
            <person name="Yin H.-F."/>
            <person name="Zhang Y."/>
            <person name="Zhu G.-F."/>
            <person name="Wan M."/>
            <person name="Huang H.-L."/>
            <person name="Qian Z."/>
            <person name="Wang S.-Y."/>
            <person name="Ma W."/>
            <person name="Yao Z.-J."/>
            <person name="Shen Y."/>
            <person name="Qiang B.-Q."/>
            <person name="Xia Q.-C."/>
            <person name="Guo X.-K."/>
            <person name="Danchin A."/>
            <person name="Saint Girons I."/>
            <person name="Somerville R.L."/>
            <person name="Wen Y.-M."/>
            <person name="Shi M.-H."/>
            <person name="Chen Z."/>
            <person name="Xu J.-G."/>
            <person name="Zhao G.-P."/>
        </authorList>
    </citation>
    <scope>NUCLEOTIDE SEQUENCE [LARGE SCALE GENOMIC DNA]</scope>
    <source>
        <strain>56601</strain>
    </source>
</reference>
<evidence type="ECO:0000255" key="1">
    <source>
        <dbReference type="HAMAP-Rule" id="MF_01080"/>
    </source>
</evidence>
<sequence>MNRSDLLENPRTQTESGFLLIHKPVGMTSSDLVVTVRKKLGFKKVGHTGTLDRAASGLMILPIGSCTSFSSVFLEKEKSYEAWVKPGESTDSGDKEGEILESLSKEQTETWFQEHQEKLRNLFEQVPTWETQEAPEVSALKVNGRRRSDLFREGVALVPVVRKIKIYRYELGKFSPESISFQIRVSAGTYIRKIVMDISDRIGFPLRLEKLVRTSIGKLNLNQADSYESLLDGKIKIHPPETILDFPTVEVPDTEVRNVLNGRKIKLEWIPVNEFLLVSPEEEILAWCKKEEHGIHELDYKYLRVFPKN</sequence>
<dbReference type="EC" id="5.4.99.25" evidence="1"/>
<dbReference type="EMBL" id="AE010300">
    <property type="protein sequence ID" value="AAN48144.2"/>
    <property type="molecule type" value="Genomic_DNA"/>
</dbReference>
<dbReference type="RefSeq" id="NP_711126.2">
    <property type="nucleotide sequence ID" value="NC_004342.2"/>
</dbReference>
<dbReference type="RefSeq" id="WP_001082025.1">
    <property type="nucleotide sequence ID" value="NC_004342.2"/>
</dbReference>
<dbReference type="SMR" id="Q8CXU1"/>
<dbReference type="FunCoup" id="Q8CXU1">
    <property type="interactions" value="465"/>
</dbReference>
<dbReference type="STRING" id="189518.LA_0945"/>
<dbReference type="PaxDb" id="189518-LA_0945"/>
<dbReference type="EnsemblBacteria" id="AAN48144">
    <property type="protein sequence ID" value="AAN48144"/>
    <property type="gene ID" value="LA_0945"/>
</dbReference>
<dbReference type="KEGG" id="lil:LA_0945"/>
<dbReference type="PATRIC" id="fig|189518.3.peg.947"/>
<dbReference type="HOGENOM" id="CLU_032087_0_0_12"/>
<dbReference type="InParanoid" id="Q8CXU1"/>
<dbReference type="OrthoDB" id="9802309at2"/>
<dbReference type="Proteomes" id="UP000001408">
    <property type="component" value="Chromosome I"/>
</dbReference>
<dbReference type="GO" id="GO:0009982">
    <property type="term" value="F:pseudouridine synthase activity"/>
    <property type="evidence" value="ECO:0000318"/>
    <property type="project" value="GO_Central"/>
</dbReference>
<dbReference type="GO" id="GO:0003723">
    <property type="term" value="F:RNA binding"/>
    <property type="evidence" value="ECO:0007669"/>
    <property type="project" value="InterPro"/>
</dbReference>
<dbReference type="GO" id="GO:0160148">
    <property type="term" value="F:tRNA pseudouridine(55) synthase activity"/>
    <property type="evidence" value="ECO:0007669"/>
    <property type="project" value="UniProtKB-EC"/>
</dbReference>
<dbReference type="GO" id="GO:1990481">
    <property type="term" value="P:mRNA pseudouridine synthesis"/>
    <property type="evidence" value="ECO:0000318"/>
    <property type="project" value="GO_Central"/>
</dbReference>
<dbReference type="GO" id="GO:0006400">
    <property type="term" value="P:tRNA modification"/>
    <property type="evidence" value="ECO:0000318"/>
    <property type="project" value="GO_Central"/>
</dbReference>
<dbReference type="GO" id="GO:0031119">
    <property type="term" value="P:tRNA pseudouridine synthesis"/>
    <property type="evidence" value="ECO:0007669"/>
    <property type="project" value="UniProtKB-UniRule"/>
</dbReference>
<dbReference type="Gene3D" id="3.30.2350.10">
    <property type="entry name" value="Pseudouridine synthase"/>
    <property type="match status" value="1"/>
</dbReference>
<dbReference type="HAMAP" id="MF_01080">
    <property type="entry name" value="TruB_bact"/>
    <property type="match status" value="1"/>
</dbReference>
<dbReference type="InterPro" id="IPR020103">
    <property type="entry name" value="PsdUridine_synth_cat_dom_sf"/>
</dbReference>
<dbReference type="InterPro" id="IPR002501">
    <property type="entry name" value="PsdUridine_synth_N"/>
</dbReference>
<dbReference type="InterPro" id="IPR014780">
    <property type="entry name" value="tRNA_psdUridine_synth_TruB"/>
</dbReference>
<dbReference type="NCBIfam" id="TIGR00431">
    <property type="entry name" value="TruB"/>
    <property type="match status" value="1"/>
</dbReference>
<dbReference type="PANTHER" id="PTHR13767:SF2">
    <property type="entry name" value="PSEUDOURIDYLATE SYNTHASE TRUB1"/>
    <property type="match status" value="1"/>
</dbReference>
<dbReference type="PANTHER" id="PTHR13767">
    <property type="entry name" value="TRNA-PSEUDOURIDINE SYNTHASE"/>
    <property type="match status" value="1"/>
</dbReference>
<dbReference type="Pfam" id="PF01509">
    <property type="entry name" value="TruB_N"/>
    <property type="match status" value="1"/>
</dbReference>
<dbReference type="SUPFAM" id="SSF55120">
    <property type="entry name" value="Pseudouridine synthase"/>
    <property type="match status" value="1"/>
</dbReference>